<dbReference type="EC" id="1.2.7.5" evidence="1 3"/>
<dbReference type="EMBL" id="X79777">
    <property type="protein sequence ID" value="CAA56170.1"/>
    <property type="molecule type" value="Genomic_DNA"/>
</dbReference>
<dbReference type="EMBL" id="AE009950">
    <property type="protein sequence ID" value="AAL80470.1"/>
    <property type="molecule type" value="Genomic_DNA"/>
</dbReference>
<dbReference type="RefSeq" id="WP_011011461.1">
    <property type="nucleotide sequence ID" value="NZ_CP023154.1"/>
</dbReference>
<dbReference type="PDB" id="1AOR">
    <property type="method" value="X-ray"/>
    <property type="resolution" value="2.30 A"/>
    <property type="chains" value="A/B=1-605"/>
</dbReference>
<dbReference type="PDBsum" id="1AOR"/>
<dbReference type="SMR" id="Q51739"/>
<dbReference type="STRING" id="186497.PF0346"/>
<dbReference type="PaxDb" id="186497-PF0346"/>
<dbReference type="GeneID" id="41712141"/>
<dbReference type="KEGG" id="pfu:PF0346"/>
<dbReference type="PATRIC" id="fig|186497.12.peg.360"/>
<dbReference type="eggNOG" id="arCOG00706">
    <property type="taxonomic scope" value="Archaea"/>
</dbReference>
<dbReference type="HOGENOM" id="CLU_020364_1_0_2"/>
<dbReference type="OrthoDB" id="30771at2157"/>
<dbReference type="PhylomeDB" id="Q51739"/>
<dbReference type="BioCyc" id="MetaCyc:MONOMER-21297"/>
<dbReference type="BRENDA" id="1.2.7.5">
    <property type="organism ID" value="5243"/>
</dbReference>
<dbReference type="SABIO-RK" id="Q51739"/>
<dbReference type="EvolutionaryTrace" id="Q51739"/>
<dbReference type="Proteomes" id="UP000001013">
    <property type="component" value="Chromosome"/>
</dbReference>
<dbReference type="GO" id="GO:0051539">
    <property type="term" value="F:4 iron, 4 sulfur cluster binding"/>
    <property type="evidence" value="ECO:0007669"/>
    <property type="project" value="UniProtKB-KW"/>
</dbReference>
<dbReference type="GO" id="GO:0033726">
    <property type="term" value="F:aldehyde ferredoxin oxidoreductase activity"/>
    <property type="evidence" value="ECO:0007669"/>
    <property type="project" value="UniProtKB-EC"/>
</dbReference>
<dbReference type="GO" id="GO:0009055">
    <property type="term" value="F:electron transfer activity"/>
    <property type="evidence" value="ECO:0007669"/>
    <property type="project" value="InterPro"/>
</dbReference>
<dbReference type="GO" id="GO:0046872">
    <property type="term" value="F:metal ion binding"/>
    <property type="evidence" value="ECO:0007669"/>
    <property type="project" value="UniProtKB-KW"/>
</dbReference>
<dbReference type="Gene3D" id="1.10.569.10">
    <property type="entry name" value="Aldehyde Ferredoxin Oxidoreductase Protein, subunit A, domain 2"/>
    <property type="match status" value="1"/>
</dbReference>
<dbReference type="Gene3D" id="1.10.599.10">
    <property type="entry name" value="Aldehyde Ferredoxin Oxidoreductase Protein, subunit A, domain 3"/>
    <property type="match status" value="1"/>
</dbReference>
<dbReference type="Gene3D" id="3.60.9.10">
    <property type="entry name" value="Aldehyde ferredoxin oxidoreductase, N-terminal domain"/>
    <property type="match status" value="1"/>
</dbReference>
<dbReference type="InterPro" id="IPR013984">
    <property type="entry name" value="Ald_Fedxn_OxRdtase_dom2"/>
</dbReference>
<dbReference type="InterPro" id="IPR013985">
    <property type="entry name" value="Ald_Fedxn_OxRdtase_dom3"/>
</dbReference>
<dbReference type="InterPro" id="IPR013983">
    <property type="entry name" value="Ald_Fedxn_OxRdtase_N"/>
</dbReference>
<dbReference type="InterPro" id="IPR036503">
    <property type="entry name" value="Ald_Fedxn_OxRdtase_N_sf"/>
</dbReference>
<dbReference type="InterPro" id="IPR001203">
    <property type="entry name" value="OxRdtase_Ald_Fedxn_C"/>
</dbReference>
<dbReference type="InterPro" id="IPR036021">
    <property type="entry name" value="Tungsten_al_ferr_oxy-like_C"/>
</dbReference>
<dbReference type="InterPro" id="IPR051919">
    <property type="entry name" value="W-dependent_AOR"/>
</dbReference>
<dbReference type="PANTHER" id="PTHR30038">
    <property type="entry name" value="ALDEHYDE FERREDOXIN OXIDOREDUCTASE"/>
    <property type="match status" value="1"/>
</dbReference>
<dbReference type="PANTHER" id="PTHR30038:SF0">
    <property type="entry name" value="TUNGSTEN-CONTAINING ALDEHYDE FERREDOXIN OXIDOREDUCTASE"/>
    <property type="match status" value="1"/>
</dbReference>
<dbReference type="Pfam" id="PF01314">
    <property type="entry name" value="AFOR_C"/>
    <property type="match status" value="1"/>
</dbReference>
<dbReference type="Pfam" id="PF02730">
    <property type="entry name" value="AFOR_N"/>
    <property type="match status" value="1"/>
</dbReference>
<dbReference type="SMART" id="SM00790">
    <property type="entry name" value="AFOR_N"/>
    <property type="match status" value="1"/>
</dbReference>
<dbReference type="SUPFAM" id="SSF48310">
    <property type="entry name" value="Aldehyde ferredoxin oxidoreductase, C-terminal domains"/>
    <property type="match status" value="1"/>
</dbReference>
<dbReference type="SUPFAM" id="SSF56228">
    <property type="entry name" value="Aldehyde ferredoxin oxidoreductase, N-terminal domain"/>
    <property type="match status" value="1"/>
</dbReference>
<name>AOR_PYRFU</name>
<accession>Q51739</accession>
<comment type="function">
    <text evidence="1 3">Aldehyde ferredoxin oxidoreductase with a broad substrate specificity (PubMed:1907273, PubMed:8390467). Catalyzes the oxidation of a range of aliphatic aldehydes to their corresponding carboxylic acids (PubMed:1907273, PubMed:8390467). In vitro can use crotonaldehyde, acetaldehyde, formaldehyde, butyraldehyde or glyceraldehyde as substrate, using methyl viologen or ferredoxin, but not NAD(P), as the electron acceptor (PubMed:1907273, PubMed:8390467). Does not oxidize glucose or glyceraldehyde 3-phosphate (PubMed:1907273). May be involved in a pyroglycolytic pathway (PubMed:1907273).</text>
</comment>
<comment type="catalytic activity">
    <reaction evidence="1 3">
        <text>an aldehyde + 2 oxidized [2Fe-2S]-[ferredoxin] + H2O = a carboxylate + 2 reduced [2Fe-2S]-[ferredoxin] + 3 H(+)</text>
        <dbReference type="Rhea" id="RHEA:16421"/>
        <dbReference type="Rhea" id="RHEA-COMP:10000"/>
        <dbReference type="Rhea" id="RHEA-COMP:10001"/>
        <dbReference type="ChEBI" id="CHEBI:15377"/>
        <dbReference type="ChEBI" id="CHEBI:15378"/>
        <dbReference type="ChEBI" id="CHEBI:17478"/>
        <dbReference type="ChEBI" id="CHEBI:29067"/>
        <dbReference type="ChEBI" id="CHEBI:33737"/>
        <dbReference type="ChEBI" id="CHEBI:33738"/>
        <dbReference type="EC" id="1.2.7.5"/>
    </reaction>
</comment>
<comment type="cofactor">
    <cofactor evidence="2">
        <name>[4Fe-4S] cluster</name>
        <dbReference type="ChEBI" id="CHEBI:49883"/>
    </cofactor>
    <text evidence="2">Binds 1 [4Fe-4S] cluster per subunit.</text>
</comment>
<comment type="cofactor">
    <cofactor evidence="1 2">
        <name>tungstopterin</name>
        <dbReference type="ChEBI" id="CHEBI:30402"/>
    </cofactor>
    <text evidence="2">Binds 1 tungstopterin cofactor per subunit.</text>
</comment>
<comment type="activity regulation">
    <text evidence="1">Inhibited by arsenite, iodoacetate and cyanide.</text>
</comment>
<comment type="biophysicochemical properties">
    <kinetics>
        <KM evidence="1">1 mM for glyceraldehyde (at 65 degrees Celsius)</KM>
        <KM evidence="3">0.72 mM for formaldehyde</KM>
        <KM evidence="1">40 uM for crotonaldehyde (at 80 degrees Celsius)</KM>
        <KM evidence="1">200 uM for ferredoxin</KM>
        <Vmax evidence="1">10.5 umol/min/mg enzyme with glyceraldehyde as substrate (at 65 degrees Celsius)</Vmax>
        <Vmax evidence="3">295.0 umol/min/mg enzyme with formaldehyde as substrate</Vmax>
        <Vmax evidence="1">67.0 umol/min/mg enzyme with crotonaldehyde as substrate (at 80 degrees Celsius)</Vmax>
        <Vmax evidence="1">41.0 umol/min/mg enzyme with ferredoxin as substrate</Vmax>
        <text>Significant activity only with aliphatic and aromatic aldehydes and only at low concentration (0.5 mM).</text>
    </kinetics>
    <phDependence>
        <text evidence="1">Optimum pH is above 10.</text>
    </phDependence>
    <temperatureDependence>
        <text evidence="1">Optimum temperature is above 90 degrees Celsius.</text>
    </temperatureDependence>
</comment>
<comment type="subunit">
    <text evidence="1 2">Monomer (PubMed:1907273). Homodimer (PubMed:7878465).</text>
</comment>
<comment type="miscellaneous">
    <text evidence="1">Shows an active (AOR) and an inactive (RTP) form.</text>
</comment>
<comment type="similarity">
    <text evidence="6">Belongs to the AOR/FOR family.</text>
</comment>
<sequence>MYGNWGRFIRVNLSTGDIKVEEYDEELAKKWLGSRGLAIYLLLKEMDPTVDPLSPENKLIIAAGPLTGTSAPTGGRYNVVTKSPLTGFITMANSGGYFGAELKFAGYDAIVVEGKAEKPVYIYIKDEHIEIRDASHIWGKKVSETEATIRKEVGSEKVKIASIGPAGENLVKFAAIMNDGHRAAGRGGVGAVMGSKNLKAIAVEGSKTVPIADKQKFMLVVREKVNKLRNDPVAGGGLPKYGTAVLVNIINENGLYPVKNFQTGVYPYAYEQSGEAMAAKYLVRNKPCYACPIGCGRVNRLPTVGETEGPEYESVWALGANLGINDLASIIEANHMCDELGLDTISTGGTLATAMELYEKGHIKDEELGDAPPFRWGNTEVLHYYIEKIAKREGFGDKLAEGSYRLAESYGHPELSMTVKKLELPAYDPRGAEGHGLGYATNNRGGCHIKNYMISPEILGYPYKMDPHDVSDDKIKMLILFQDLTALIDSAGLCLFTTFGLGADDYRDLLNAALGWDFTTEDYLKIGERIWNAERLFNLKAGLDPARDDTLPKRFLEEPMPEGPNKGHTVRLKEMLPRYYKLRGWTEDGKIPKEKLEELGIAEFY</sequence>
<reference key="1">
    <citation type="journal article" date="1995" name="J. Bacteriol.">
        <title>Molecular characterization of the genes encoding the tungsten-containing aldehyde ferredoxin oxidoreductase from Pyrococcus furiosus and formaldehyde ferredoxin oxidoreductase from Thermococcus litoralis.</title>
        <authorList>
            <person name="Kletzin A."/>
            <person name="Mukund S."/>
            <person name="Kelley-Crouse T.L."/>
            <person name="Chan M.K.S."/>
            <person name="Rees D.C."/>
            <person name="Adams M.W.W."/>
        </authorList>
    </citation>
    <scope>NUCLEOTIDE SEQUENCE [GENOMIC DNA]</scope>
    <source>
        <strain>ATCC 43587 / DSM 3638 / JCM 8422 / Vc1</strain>
    </source>
</reference>
<reference key="2">
    <citation type="journal article" date="1999" name="Genetics">
        <title>Divergence of the hyperthermophilic archaea Pyrococcus furiosus and P. horikoshii inferred from complete genomic sequences.</title>
        <authorList>
            <person name="Maeder D.L."/>
            <person name="Weiss R.B."/>
            <person name="Dunn D.M."/>
            <person name="Cherry J.L."/>
            <person name="Gonzalez J.M."/>
            <person name="DiRuggiero J."/>
            <person name="Robb F.T."/>
        </authorList>
    </citation>
    <scope>NUCLEOTIDE SEQUENCE [LARGE SCALE GENOMIC DNA]</scope>
    <source>
        <strain>ATCC 43587 / DSM 3638 / JCM 8422 / Vc1</strain>
    </source>
</reference>
<reference key="3">
    <citation type="journal article" date="1991" name="J. Biol. Chem.">
        <title>The novel tungsten-iron-sulfur protein of the hyperthermophilic archaebacterium, Pyrococcus furiosus, is an aldehyde ferredoxin oxidoreductase. Evidence for its participation in a unique glycolytic pathway.</title>
        <authorList>
            <person name="Mukund S."/>
            <person name="Adams M.W.W."/>
        </authorList>
    </citation>
    <scope>PROTEIN SEQUENCE OF 1-10</scope>
    <scope>FUNCTION</scope>
    <scope>CATALYTIC ACTIVITY</scope>
    <scope>SUBSTRATE SPECIFICITY</scope>
    <scope>COFACTOR</scope>
    <scope>ACTIVITY REGULATION</scope>
    <scope>BIOPHYSICOCHEMICAL PROPERTIES</scope>
    <scope>SUBUNIT</scope>
    <source>
        <strain>ATCC 43587 / DSM 3638 / JCM 8422 / Vc1</strain>
    </source>
</reference>
<reference key="4">
    <citation type="journal article" date="1993" name="J. Biol. Chem.">
        <title>Characterization of a novel tungsten-containing formaldehyde ferredoxin oxidoreductase from the hyperthermophilic archaeon, Thermococcus litoralis. A role for tungsten in peptide catabolism.</title>
        <authorList>
            <person name="Mukund S."/>
            <person name="Adams M.W.W."/>
        </authorList>
    </citation>
    <scope>PROTEIN SEQUENCE OF 1-26</scope>
    <scope>FUNCTION</scope>
    <scope>CATALYTIC ACTIVITY</scope>
    <scope>BIOPHYSICOCHEMICAL PROPERTIES</scope>
</reference>
<reference evidence="8" key="5">
    <citation type="journal article" date="1995" name="Science">
        <title>Structure of a hyperthermophilic tungstopterin enzyme, aldehyde ferredoxin oxidoreductase.</title>
        <authorList>
            <person name="Chan M.K.S."/>
            <person name="Mukund S."/>
            <person name="Kletzin A."/>
            <person name="Adams M.W.W."/>
            <person name="Rees D.C."/>
        </authorList>
    </citation>
    <scope>X-RAY CRYSTALLOGRAPHY (2.30 ANGSTROMS) IN COMPLEX WITH TUNGSTOPTERIN AND IRON-SULFUR (4FE-4S) CLUSTER</scope>
    <scope>COFACTOR</scope>
    <scope>SUBUNIT</scope>
    <source>
        <strain>ATCC 43587 / DSM 3638 / JCM 8422 / Vc1</strain>
    </source>
</reference>
<proteinExistence type="evidence at protein level"/>
<evidence type="ECO:0000269" key="1">
    <source>
    </source>
</evidence>
<evidence type="ECO:0000269" key="2">
    <source>
    </source>
</evidence>
<evidence type="ECO:0000269" key="3">
    <source>
    </source>
</evidence>
<evidence type="ECO:0000303" key="4">
    <source>
    </source>
</evidence>
<evidence type="ECO:0000303" key="5">
    <source>
    </source>
</evidence>
<evidence type="ECO:0000305" key="6"/>
<evidence type="ECO:0000312" key="7">
    <source>
        <dbReference type="EMBL" id="AAL80470.1"/>
    </source>
</evidence>
<evidence type="ECO:0007744" key="8">
    <source>
        <dbReference type="PDB" id="1AOR"/>
    </source>
</evidence>
<evidence type="ECO:0007829" key="9">
    <source>
        <dbReference type="PDB" id="1AOR"/>
    </source>
</evidence>
<organism>
    <name type="scientific">Pyrococcus furiosus (strain ATCC 43587 / DSM 3638 / JCM 8422 / Vc1)</name>
    <dbReference type="NCBI Taxonomy" id="186497"/>
    <lineage>
        <taxon>Archaea</taxon>
        <taxon>Methanobacteriati</taxon>
        <taxon>Methanobacteriota</taxon>
        <taxon>Thermococci</taxon>
        <taxon>Thermococcales</taxon>
        <taxon>Thermococcaceae</taxon>
        <taxon>Pyrococcus</taxon>
    </lineage>
</organism>
<protein>
    <recommendedName>
        <fullName evidence="5">Tungsten-containing aldehyde ferredoxin oxidoreductase</fullName>
        <ecNumber evidence="1 3">1.2.7.5</ecNumber>
    </recommendedName>
    <alternativeName>
        <fullName evidence="4">Aldehyde ferredoxin oxidoreductase</fullName>
        <shortName evidence="4">AOR</shortName>
    </alternativeName>
</protein>
<feature type="chain" id="PRO_0000064606" description="Tungsten-containing aldehyde ferredoxin oxidoreductase">
    <location>
        <begin position="1"/>
        <end position="605"/>
    </location>
</feature>
<feature type="binding site" evidence="2 8">
    <location>
        <position position="76"/>
    </location>
    <ligand>
        <name>tungstopterin</name>
        <dbReference type="ChEBI" id="CHEBI:30402"/>
    </ligand>
</feature>
<feature type="binding site" evidence="2 8">
    <location>
        <position position="93"/>
    </location>
    <ligand>
        <name>tungstopterin</name>
        <dbReference type="ChEBI" id="CHEBI:30402"/>
    </ligand>
</feature>
<feature type="binding site" evidence="2 8">
    <location>
        <position position="95"/>
    </location>
    <ligand>
        <name>tungstopterin</name>
        <dbReference type="ChEBI" id="CHEBI:30402"/>
    </ligand>
</feature>
<feature type="binding site" evidence="2 8">
    <location>
        <position position="182"/>
    </location>
    <ligand>
        <name>tungstopterin</name>
        <dbReference type="ChEBI" id="CHEBI:30402"/>
    </ligand>
</feature>
<feature type="binding site" evidence="2 8">
    <location>
        <position position="183"/>
    </location>
    <ligand>
        <name>tungstopterin</name>
        <dbReference type="ChEBI" id="CHEBI:30402"/>
    </ligand>
</feature>
<feature type="binding site" evidence="2 8">
    <location>
        <position position="185"/>
    </location>
    <ligand>
        <name>tungstopterin</name>
        <dbReference type="ChEBI" id="CHEBI:30402"/>
    </ligand>
</feature>
<feature type="binding site" evidence="2 8">
    <location>
        <position position="186"/>
    </location>
    <ligand>
        <name>tungstopterin</name>
        <dbReference type="ChEBI" id="CHEBI:30402"/>
    </ligand>
</feature>
<feature type="binding site" evidence="2 8">
    <location>
        <position position="288"/>
    </location>
    <ligand>
        <name>[4Fe-4S] cluster</name>
        <dbReference type="ChEBI" id="CHEBI:49883"/>
    </ligand>
</feature>
<feature type="binding site" evidence="2 8">
    <location>
        <position position="291"/>
    </location>
    <ligand>
        <name>[4Fe-4S] cluster</name>
        <dbReference type="ChEBI" id="CHEBI:49883"/>
    </ligand>
</feature>
<feature type="binding site" evidence="2 8">
    <location>
        <position position="295"/>
    </location>
    <ligand>
        <name>[4Fe-4S] cluster</name>
        <dbReference type="ChEBI" id="CHEBI:49883"/>
    </ligand>
</feature>
<feature type="binding site" evidence="2 8">
    <location>
        <position position="338"/>
    </location>
    <ligand>
        <name>tungstopterin</name>
        <dbReference type="ChEBI" id="CHEBI:30402"/>
    </ligand>
</feature>
<feature type="binding site" evidence="2 8">
    <location>
        <position position="342"/>
    </location>
    <ligand>
        <name>tungstopterin</name>
        <dbReference type="ChEBI" id="CHEBI:30402"/>
    </ligand>
</feature>
<feature type="binding site" evidence="2 8">
    <location>
        <position position="343"/>
    </location>
    <ligand>
        <name>tungstopterin</name>
        <dbReference type="ChEBI" id="CHEBI:30402"/>
    </ligand>
</feature>
<feature type="binding site" evidence="2 8">
    <location>
        <position position="444"/>
    </location>
    <ligand>
        <name>tungstopterin</name>
        <dbReference type="ChEBI" id="CHEBI:30402"/>
    </ligand>
</feature>
<feature type="binding site" evidence="2 8">
    <location>
        <position position="450"/>
    </location>
    <ligand>
        <name>tungstopterin</name>
        <dbReference type="ChEBI" id="CHEBI:30402"/>
    </ligand>
</feature>
<feature type="binding site" evidence="2 8">
    <location>
        <position position="489"/>
    </location>
    <ligand>
        <name>tungstopterin</name>
        <dbReference type="ChEBI" id="CHEBI:30402"/>
    </ligand>
</feature>
<feature type="binding site" evidence="2 8">
    <location>
        <position position="493"/>
    </location>
    <ligand>
        <name>tungstopterin</name>
        <dbReference type="ChEBI" id="CHEBI:30402"/>
    </ligand>
</feature>
<feature type="binding site" evidence="2 8">
    <location>
        <position position="494"/>
    </location>
    <ligand>
        <name>[4Fe-4S] cluster</name>
        <dbReference type="ChEBI" id="CHEBI:49883"/>
    </ligand>
</feature>
<feature type="binding site" evidence="2 8">
    <location>
        <position position="495"/>
    </location>
    <ligand>
        <name>tungstopterin</name>
        <dbReference type="ChEBI" id="CHEBI:30402"/>
    </ligand>
</feature>
<feature type="sequence conflict" description="In Ref. 3; AA sequence." evidence="6" ref="3">
    <original>R</original>
    <variation>E</variation>
    <location>
        <position position="10"/>
    </location>
</feature>
<feature type="strand" evidence="9">
    <location>
        <begin position="6"/>
        <end position="12"/>
    </location>
</feature>
<feature type="turn" evidence="9">
    <location>
        <begin position="13"/>
        <end position="16"/>
    </location>
</feature>
<feature type="strand" evidence="9">
    <location>
        <begin position="17"/>
        <end position="22"/>
    </location>
</feature>
<feature type="helix" evidence="9">
    <location>
        <begin position="25"/>
        <end position="31"/>
    </location>
</feature>
<feature type="helix" evidence="9">
    <location>
        <begin position="35"/>
        <end position="45"/>
    </location>
</feature>
<feature type="strand" evidence="9">
    <location>
        <begin position="59"/>
        <end position="63"/>
    </location>
</feature>
<feature type="turn" evidence="9">
    <location>
        <begin position="65"/>
        <end position="68"/>
    </location>
</feature>
<feature type="strand" evidence="9">
    <location>
        <begin position="69"/>
        <end position="71"/>
    </location>
</feature>
<feature type="strand" evidence="9">
    <location>
        <begin position="77"/>
        <end position="82"/>
    </location>
</feature>
<feature type="turn" evidence="9">
    <location>
        <begin position="84"/>
        <end position="86"/>
    </location>
</feature>
<feature type="strand" evidence="9">
    <location>
        <begin position="87"/>
        <end position="94"/>
    </location>
</feature>
<feature type="helix" evidence="9">
    <location>
        <begin position="98"/>
        <end position="104"/>
    </location>
</feature>
<feature type="strand" evidence="9">
    <location>
        <begin position="108"/>
        <end position="114"/>
    </location>
</feature>
<feature type="strand" evidence="9">
    <location>
        <begin position="120"/>
        <end position="125"/>
    </location>
</feature>
<feature type="strand" evidence="9">
    <location>
        <begin position="128"/>
        <end position="133"/>
    </location>
</feature>
<feature type="turn" evidence="9">
    <location>
        <begin position="135"/>
        <end position="139"/>
    </location>
</feature>
<feature type="helix" evidence="9">
    <location>
        <begin position="142"/>
        <end position="153"/>
    </location>
</feature>
<feature type="strand" evidence="9">
    <location>
        <begin position="159"/>
        <end position="162"/>
    </location>
</feature>
<feature type="helix" evidence="9">
    <location>
        <begin position="165"/>
        <end position="168"/>
    </location>
</feature>
<feature type="strand" evidence="9">
    <location>
        <begin position="176"/>
        <end position="178"/>
    </location>
</feature>
<feature type="turn" evidence="9">
    <location>
        <begin position="179"/>
        <end position="181"/>
    </location>
</feature>
<feature type="strand" evidence="9">
    <location>
        <begin position="182"/>
        <end position="184"/>
    </location>
</feature>
<feature type="strand" evidence="9">
    <location>
        <begin position="186"/>
        <end position="188"/>
    </location>
</feature>
<feature type="helix" evidence="9">
    <location>
        <begin position="189"/>
        <end position="195"/>
    </location>
</feature>
<feature type="strand" evidence="9">
    <location>
        <begin position="198"/>
        <end position="204"/>
    </location>
</feature>
<feature type="helix" evidence="9">
    <location>
        <begin position="214"/>
        <end position="230"/>
    </location>
</feature>
<feature type="helix" evidence="9">
    <location>
        <begin position="232"/>
        <end position="235"/>
    </location>
</feature>
<feature type="helix" evidence="9">
    <location>
        <begin position="237"/>
        <end position="241"/>
    </location>
</feature>
<feature type="helix" evidence="9">
    <location>
        <begin position="243"/>
        <end position="245"/>
    </location>
</feature>
<feature type="helix" evidence="9">
    <location>
        <begin position="246"/>
        <end position="252"/>
    </location>
</feature>
<feature type="turn" evidence="9">
    <location>
        <begin position="259"/>
        <end position="262"/>
    </location>
</feature>
<feature type="helix" evidence="9">
    <location>
        <begin position="269"/>
        <end position="272"/>
    </location>
</feature>
<feature type="helix" evidence="9">
    <location>
        <begin position="274"/>
        <end position="280"/>
    </location>
</feature>
<feature type="strand" evidence="9">
    <location>
        <begin position="282"/>
        <end position="286"/>
    </location>
</feature>
<feature type="strand" evidence="9">
    <location>
        <begin position="296"/>
        <end position="301"/>
    </location>
</feature>
<feature type="turn" evidence="9">
    <location>
        <begin position="302"/>
        <end position="304"/>
    </location>
</feature>
<feature type="strand" evidence="9">
    <location>
        <begin position="305"/>
        <end position="308"/>
    </location>
</feature>
<feature type="helix" evidence="9">
    <location>
        <begin position="312"/>
        <end position="318"/>
    </location>
</feature>
<feature type="helix" evidence="9">
    <location>
        <begin position="320"/>
        <end position="322"/>
    </location>
</feature>
<feature type="helix" evidence="9">
    <location>
        <begin position="327"/>
        <end position="340"/>
    </location>
</feature>
<feature type="helix" evidence="9">
    <location>
        <begin position="344"/>
        <end position="359"/>
    </location>
</feature>
<feature type="helix" evidence="9">
    <location>
        <begin position="365"/>
        <end position="368"/>
    </location>
</feature>
<feature type="helix" evidence="9">
    <location>
        <begin position="380"/>
        <end position="390"/>
    </location>
</feature>
<feature type="helix" evidence="9">
    <location>
        <begin position="396"/>
        <end position="399"/>
    </location>
</feature>
<feature type="helix" evidence="9">
    <location>
        <begin position="403"/>
        <end position="409"/>
    </location>
</feature>
<feature type="helix" evidence="9">
    <location>
        <begin position="413"/>
        <end position="415"/>
    </location>
</feature>
<feature type="helix" evidence="9">
    <location>
        <begin position="429"/>
        <end position="431"/>
    </location>
</feature>
<feature type="helix" evidence="9">
    <location>
        <begin position="433"/>
        <end position="441"/>
    </location>
</feature>
<feature type="helix" evidence="9">
    <location>
        <begin position="449"/>
        <end position="451"/>
    </location>
</feature>
<feature type="helix" evidence="9">
    <location>
        <begin position="454"/>
        <end position="457"/>
    </location>
</feature>
<feature type="strand" evidence="9">
    <location>
        <begin position="461"/>
        <end position="463"/>
    </location>
</feature>
<feature type="helix" evidence="9">
    <location>
        <begin position="472"/>
        <end position="491"/>
    </location>
</feature>
<feature type="helix" evidence="9">
    <location>
        <begin position="495"/>
        <end position="498"/>
    </location>
</feature>
<feature type="helix" evidence="9">
    <location>
        <begin position="503"/>
        <end position="514"/>
    </location>
</feature>
<feature type="helix" evidence="9">
    <location>
        <begin position="520"/>
        <end position="541"/>
    </location>
</feature>
<feature type="helix" evidence="9">
    <location>
        <begin position="545"/>
        <end position="548"/>
    </location>
</feature>
<feature type="helix" evidence="9">
    <location>
        <begin position="553"/>
        <end position="557"/>
    </location>
</feature>
<feature type="turn" evidence="9">
    <location>
        <begin position="564"/>
        <end position="567"/>
    </location>
</feature>
<feature type="helix" evidence="9">
    <location>
        <begin position="572"/>
        <end position="583"/>
    </location>
</feature>
<feature type="helix" evidence="9">
    <location>
        <begin position="593"/>
        <end position="599"/>
    </location>
</feature>
<feature type="helix" evidence="9">
    <location>
        <begin position="602"/>
        <end position="604"/>
    </location>
</feature>
<keyword id="KW-0002">3D-structure</keyword>
<keyword id="KW-0004">4Fe-4S</keyword>
<keyword id="KW-0903">Direct protein sequencing</keyword>
<keyword id="KW-0408">Iron</keyword>
<keyword id="KW-0411">Iron-sulfur</keyword>
<keyword id="KW-0479">Metal-binding</keyword>
<keyword id="KW-0560">Oxidoreductase</keyword>
<keyword id="KW-1185">Reference proteome</keyword>
<keyword id="KW-0826">Tungsten</keyword>
<gene>
    <name evidence="5" type="primary">aor</name>
    <name evidence="7" type="ordered locus">PF0346</name>
</gene>